<accession>Q9JI35</accession>
<accession>Q9JI36</accession>
<proteinExistence type="evidence at transcript level"/>
<comment type="function">
    <text>The H3 subclass of histamine receptors could mediate the histamine signals in CNS and peripheral nervous system. Signals through the inhibition of adenylate cyclase and displays high constitutive activity (spontaneous activity in the absence of agonist).</text>
</comment>
<comment type="subcellular location">
    <subcellularLocation>
        <location>Cell membrane</location>
        <topology>Multi-pass membrane protein</topology>
    </subcellularLocation>
</comment>
<comment type="alternative products">
    <event type="alternative splicing"/>
    <isoform>
        <id>Q9JI35-1</id>
        <name>Long</name>
        <name>H3L</name>
        <sequence type="displayed"/>
    </isoform>
    <isoform>
        <id>Q9JI35-2</id>
        <name>Short</name>
        <name>H3S</name>
        <sequence type="described" ref="VSP_001880"/>
    </isoform>
</comment>
<comment type="tissue specificity">
    <text>Expressed widely and abundantly throughout the brain. Highly expressed in discrete neuronal populations such as pyramidal cells in cerebral cortex or cerebellar Purkinje cells.</text>
</comment>
<comment type="similarity">
    <text evidence="3">Belongs to the G-protein coupled receptor 1 family.</text>
</comment>
<gene>
    <name type="primary">HRH3</name>
</gene>
<organism>
    <name type="scientific">Cavia porcellus</name>
    <name type="common">Guinea pig</name>
    <dbReference type="NCBI Taxonomy" id="10141"/>
    <lineage>
        <taxon>Eukaryota</taxon>
        <taxon>Metazoa</taxon>
        <taxon>Chordata</taxon>
        <taxon>Craniata</taxon>
        <taxon>Vertebrata</taxon>
        <taxon>Euteleostomi</taxon>
        <taxon>Mammalia</taxon>
        <taxon>Eutheria</taxon>
        <taxon>Euarchontoglires</taxon>
        <taxon>Glires</taxon>
        <taxon>Rodentia</taxon>
        <taxon>Hystricomorpha</taxon>
        <taxon>Caviidae</taxon>
        <taxon>Cavia</taxon>
    </lineage>
</organism>
<dbReference type="EMBL" id="AF267537">
    <property type="protein sequence ID" value="AAF78947.1"/>
    <property type="molecule type" value="mRNA"/>
</dbReference>
<dbReference type="EMBL" id="AF267538">
    <property type="protein sequence ID" value="AAF78950.1"/>
    <property type="molecule type" value="mRNA"/>
</dbReference>
<dbReference type="RefSeq" id="NP_001166208.1">
    <molecule id="Q9JI35-1"/>
    <property type="nucleotide sequence ID" value="NM_001172737.1"/>
</dbReference>
<dbReference type="SMR" id="Q9JI35"/>
<dbReference type="FunCoup" id="Q9JI35">
    <property type="interactions" value="512"/>
</dbReference>
<dbReference type="STRING" id="10141.ENSCPOP00000020710"/>
<dbReference type="BindingDB" id="Q9JI35"/>
<dbReference type="ChEMBL" id="CHEMBL5076"/>
<dbReference type="DrugCentral" id="Q9JI35"/>
<dbReference type="GlyCosmos" id="Q9JI35">
    <property type="glycosylation" value="1 site, No reported glycans"/>
</dbReference>
<dbReference type="GeneID" id="100135541"/>
<dbReference type="KEGG" id="cpoc:100135541"/>
<dbReference type="CTD" id="11255"/>
<dbReference type="eggNOG" id="KOG3656">
    <property type="taxonomic scope" value="Eukaryota"/>
</dbReference>
<dbReference type="InParanoid" id="Q9JI35"/>
<dbReference type="OrthoDB" id="10071887at2759"/>
<dbReference type="Proteomes" id="UP000005447">
    <property type="component" value="Unassembled WGS sequence"/>
</dbReference>
<dbReference type="GO" id="GO:0030425">
    <property type="term" value="C:dendrite"/>
    <property type="evidence" value="ECO:0007669"/>
    <property type="project" value="TreeGrafter"/>
</dbReference>
<dbReference type="GO" id="GO:0005886">
    <property type="term" value="C:plasma membrane"/>
    <property type="evidence" value="ECO:0007669"/>
    <property type="project" value="UniProtKB-SubCell"/>
</dbReference>
<dbReference type="GO" id="GO:0045202">
    <property type="term" value="C:synapse"/>
    <property type="evidence" value="ECO:0007669"/>
    <property type="project" value="TreeGrafter"/>
</dbReference>
<dbReference type="GO" id="GO:0016907">
    <property type="term" value="F:G protein-coupled acetylcholine receptor activity"/>
    <property type="evidence" value="ECO:0007669"/>
    <property type="project" value="TreeGrafter"/>
</dbReference>
<dbReference type="GO" id="GO:0004993">
    <property type="term" value="F:G protein-coupled serotonin receptor activity"/>
    <property type="evidence" value="ECO:0007669"/>
    <property type="project" value="TreeGrafter"/>
</dbReference>
<dbReference type="GO" id="GO:0004969">
    <property type="term" value="F:histamine receptor activity"/>
    <property type="evidence" value="ECO:0007669"/>
    <property type="project" value="InterPro"/>
</dbReference>
<dbReference type="GO" id="GO:0007197">
    <property type="term" value="P:adenylate cyclase-inhibiting G protein-coupled acetylcholine receptor signaling pathway"/>
    <property type="evidence" value="ECO:0007669"/>
    <property type="project" value="TreeGrafter"/>
</dbReference>
<dbReference type="GO" id="GO:0007187">
    <property type="term" value="P:G protein-coupled receptor signaling pathway, coupled to cyclic nucleotide second messenger"/>
    <property type="evidence" value="ECO:0007669"/>
    <property type="project" value="TreeGrafter"/>
</dbReference>
<dbReference type="CDD" id="cd15296">
    <property type="entry name" value="7tmA_Histamine_H3R"/>
    <property type="match status" value="1"/>
</dbReference>
<dbReference type="FunFam" id="1.20.1070.10:FF:000138">
    <property type="entry name" value="histamine H3 receptor"/>
    <property type="match status" value="1"/>
</dbReference>
<dbReference type="Gene3D" id="1.20.1070.10">
    <property type="entry name" value="Rhodopsin 7-helix transmembrane proteins"/>
    <property type="match status" value="1"/>
</dbReference>
<dbReference type="InterPro" id="IPR041998">
    <property type="entry name" value="7tmA_HRH3"/>
</dbReference>
<dbReference type="InterPro" id="IPR000276">
    <property type="entry name" value="GPCR_Rhodpsn"/>
</dbReference>
<dbReference type="InterPro" id="IPR017452">
    <property type="entry name" value="GPCR_Rhodpsn_7TM"/>
</dbReference>
<dbReference type="InterPro" id="IPR003980">
    <property type="entry name" value="Histamine_H3_rcpt"/>
</dbReference>
<dbReference type="PANTHER" id="PTHR24247">
    <property type="entry name" value="5-HYDROXYTRYPTAMINE RECEPTOR"/>
    <property type="match status" value="1"/>
</dbReference>
<dbReference type="PANTHER" id="PTHR24247:SF194">
    <property type="entry name" value="HISTAMINE H3 RECEPTOR"/>
    <property type="match status" value="1"/>
</dbReference>
<dbReference type="Pfam" id="PF00001">
    <property type="entry name" value="7tm_1"/>
    <property type="match status" value="1"/>
</dbReference>
<dbReference type="PRINTS" id="PR00237">
    <property type="entry name" value="GPCRRHODOPSN"/>
</dbReference>
<dbReference type="PRINTS" id="PR01471">
    <property type="entry name" value="HISTAMINEH3R"/>
</dbReference>
<dbReference type="SMART" id="SM01381">
    <property type="entry name" value="7TM_GPCR_Srsx"/>
    <property type="match status" value="1"/>
</dbReference>
<dbReference type="SUPFAM" id="SSF81321">
    <property type="entry name" value="Family A G protein-coupled receptor-like"/>
    <property type="match status" value="1"/>
</dbReference>
<dbReference type="PROSITE" id="PS00237">
    <property type="entry name" value="G_PROTEIN_RECEP_F1_1"/>
    <property type="match status" value="1"/>
</dbReference>
<dbReference type="PROSITE" id="PS50262">
    <property type="entry name" value="G_PROTEIN_RECEP_F1_2"/>
    <property type="match status" value="1"/>
</dbReference>
<feature type="chain" id="PRO_0000069689" description="Histamine H3 receptor">
    <location>
        <begin position="1"/>
        <end position="445"/>
    </location>
</feature>
<feature type="topological domain" description="Extracellular" evidence="2">
    <location>
        <begin position="1"/>
        <end position="40"/>
    </location>
</feature>
<feature type="transmembrane region" description="Helical; Name=1" evidence="2">
    <location>
        <begin position="41"/>
        <end position="61"/>
    </location>
</feature>
<feature type="topological domain" description="Cytoplasmic" evidence="2">
    <location>
        <begin position="62"/>
        <end position="71"/>
    </location>
</feature>
<feature type="transmembrane region" description="Helical; Name=2" evidence="2">
    <location>
        <begin position="72"/>
        <end position="92"/>
    </location>
</feature>
<feature type="topological domain" description="Extracellular" evidence="2">
    <location>
        <begin position="93"/>
        <end position="109"/>
    </location>
</feature>
<feature type="transmembrane region" description="Helical; Name=3" evidence="2">
    <location>
        <begin position="110"/>
        <end position="130"/>
    </location>
</feature>
<feature type="topological domain" description="Cytoplasmic" evidence="2">
    <location>
        <begin position="131"/>
        <end position="157"/>
    </location>
</feature>
<feature type="transmembrane region" description="Helical; Name=4" evidence="2">
    <location>
        <begin position="158"/>
        <end position="178"/>
    </location>
</feature>
<feature type="topological domain" description="Extracellular" evidence="2">
    <location>
        <begin position="179"/>
        <end position="197"/>
    </location>
</feature>
<feature type="transmembrane region" description="Helical; Name=5" evidence="2">
    <location>
        <begin position="198"/>
        <end position="218"/>
    </location>
</feature>
<feature type="topological domain" description="Cytoplasmic" evidence="2">
    <location>
        <begin position="219"/>
        <end position="359"/>
    </location>
</feature>
<feature type="transmembrane region" description="Helical; Name=6" evidence="2">
    <location>
        <begin position="360"/>
        <end position="380"/>
    </location>
</feature>
<feature type="topological domain" description="Extracellular" evidence="2">
    <location>
        <begin position="381"/>
        <end position="398"/>
    </location>
</feature>
<feature type="transmembrane region" description="Helical; Name=7" evidence="2">
    <location>
        <begin position="399"/>
        <end position="419"/>
    </location>
</feature>
<feature type="topological domain" description="Cytoplasmic" evidence="2">
    <location>
        <begin position="420"/>
        <end position="445"/>
    </location>
</feature>
<feature type="region of interest" description="Disordered" evidence="4">
    <location>
        <begin position="236"/>
        <end position="264"/>
    </location>
</feature>
<feature type="region of interest" description="Disordered" evidence="4">
    <location>
        <begin position="288"/>
        <end position="336"/>
    </location>
</feature>
<feature type="compositionally biased region" description="Low complexity" evidence="4">
    <location>
        <begin position="299"/>
        <end position="312"/>
    </location>
</feature>
<feature type="modified residue" description="Phosphoserine" evidence="1">
    <location>
        <position position="439"/>
    </location>
</feature>
<feature type="glycosylation site" description="N-linked (GlcNAc...) asparagine" evidence="2">
    <location>
        <position position="11"/>
    </location>
</feature>
<feature type="disulfide bond" evidence="3">
    <location>
        <begin position="108"/>
        <end position="189"/>
    </location>
</feature>
<feature type="splice variant" id="VSP_001880" description="In isoform Short." evidence="5">
    <location>
        <begin position="276"/>
        <end position="305"/>
    </location>
</feature>
<sequence>MERAPPDGLMNASGALAGEAAAAAGGARTFSAAWTAVLAALMALLIVATVLGNALVMLAFVADSSLRTQNNFFLLNLAISDFLVGVFCIPLYVPYVLTGRWTFGRGLCKLWLVVDYLLCTSSVFNIVLISYDRFLSVTRAVSYRAQQGDTRRAVRKMVLVWVLAFLLYGPAILSWEYLSGGSSIPEGHCYAEFFYNWYFLITASTLEFFTPFLSVTFFNLSIYLNIQRRTRLRLDGGAREAGPDPLPEAQSSPPQPPPGCWGCWPKGQGESMPLHRYGVGEAGPGAEAGEAALGGGSGAAASPTSSSGSSSRGTERPRSLKRGSKPSASSASLEKRMKMVSQSITQRFRLSRDKKVAKSLAIIVSIFGLCWAPYTLLMIIRAACHGHCVPDYWYETSFWLLWANSAVNPVLYPLCHYSFRRAFTKLLCPQKLKVQPHSSLEHCWK</sequence>
<protein>
    <recommendedName>
        <fullName>Histamine H3 receptor</fullName>
        <shortName>H3R</shortName>
        <shortName>HH3R</shortName>
    </recommendedName>
</protein>
<evidence type="ECO:0000250" key="1">
    <source>
        <dbReference type="UniProtKB" id="P58406"/>
    </source>
</evidence>
<evidence type="ECO:0000255" key="2"/>
<evidence type="ECO:0000255" key="3">
    <source>
        <dbReference type="PROSITE-ProRule" id="PRU00521"/>
    </source>
</evidence>
<evidence type="ECO:0000256" key="4">
    <source>
        <dbReference type="SAM" id="MobiDB-lite"/>
    </source>
</evidence>
<evidence type="ECO:0000303" key="5">
    <source>
    </source>
</evidence>
<reference key="1">
    <citation type="journal article" date="2000" name="NeuroReport">
        <title>Cloning and cerebral expression of the guinea pig histamine H3 receptor: evidence for two isoforms.</title>
        <authorList>
            <person name="Tardivel-Lacombe J."/>
            <person name="Rouleau A."/>
            <person name="Heron A."/>
            <person name="Morisset S."/>
            <person name="Pillot C."/>
            <person name="Cochois V."/>
            <person name="Schwartz J.-C."/>
            <person name="Arrang J.-M."/>
        </authorList>
    </citation>
    <scope>NUCLEOTIDE SEQUENCE [MRNA] (ISOFORMS LONG AND SHORT)</scope>
    <source>
        <tissue>Brain</tissue>
    </source>
</reference>
<name>HRH3_CAVPO</name>
<keyword id="KW-0025">Alternative splicing</keyword>
<keyword id="KW-1003">Cell membrane</keyword>
<keyword id="KW-1015">Disulfide bond</keyword>
<keyword id="KW-0297">G-protein coupled receptor</keyword>
<keyword id="KW-0325">Glycoprotein</keyword>
<keyword id="KW-0472">Membrane</keyword>
<keyword id="KW-0597">Phosphoprotein</keyword>
<keyword id="KW-0675">Receptor</keyword>
<keyword id="KW-1185">Reference proteome</keyword>
<keyword id="KW-0807">Transducer</keyword>
<keyword id="KW-0812">Transmembrane</keyword>
<keyword id="KW-1133">Transmembrane helix</keyword>